<comment type="function">
    <text evidence="1">Catalyzes the dehydration of D-mannonate.</text>
</comment>
<comment type="catalytic activity">
    <reaction evidence="1">
        <text>D-mannonate = 2-dehydro-3-deoxy-D-gluconate + H2O</text>
        <dbReference type="Rhea" id="RHEA:20097"/>
        <dbReference type="ChEBI" id="CHEBI:15377"/>
        <dbReference type="ChEBI" id="CHEBI:17767"/>
        <dbReference type="ChEBI" id="CHEBI:57990"/>
        <dbReference type="EC" id="4.2.1.8"/>
    </reaction>
</comment>
<comment type="cofactor">
    <cofactor evidence="1">
        <name>Fe(2+)</name>
        <dbReference type="ChEBI" id="CHEBI:29033"/>
    </cofactor>
    <cofactor evidence="1">
        <name>Mn(2+)</name>
        <dbReference type="ChEBI" id="CHEBI:29035"/>
    </cofactor>
</comment>
<comment type="pathway">
    <text evidence="1">Carbohydrate metabolism; pentose and glucuronate interconversion.</text>
</comment>
<comment type="similarity">
    <text evidence="1">Belongs to the mannonate dehydratase family.</text>
</comment>
<feature type="chain" id="PRO_1000094217" description="Mannonate dehydratase">
    <location>
        <begin position="1"/>
        <end position="394"/>
    </location>
</feature>
<evidence type="ECO:0000255" key="1">
    <source>
        <dbReference type="HAMAP-Rule" id="MF_00106"/>
    </source>
</evidence>
<dbReference type="EC" id="4.2.1.8" evidence="1"/>
<dbReference type="EMBL" id="CP001138">
    <property type="protein sequence ID" value="ACH49973.1"/>
    <property type="molecule type" value="Genomic_DNA"/>
</dbReference>
<dbReference type="RefSeq" id="WP_000815487.1">
    <property type="nucleotide sequence ID" value="NC_011149.1"/>
</dbReference>
<dbReference type="SMR" id="B5F621"/>
<dbReference type="KEGG" id="sea:SeAg_B3307"/>
<dbReference type="HOGENOM" id="CLU_058621_2_0_6"/>
<dbReference type="UniPathway" id="UPA00246"/>
<dbReference type="Proteomes" id="UP000008819">
    <property type="component" value="Chromosome"/>
</dbReference>
<dbReference type="GO" id="GO:0008198">
    <property type="term" value="F:ferrous iron binding"/>
    <property type="evidence" value="ECO:0007669"/>
    <property type="project" value="TreeGrafter"/>
</dbReference>
<dbReference type="GO" id="GO:0030145">
    <property type="term" value="F:manganese ion binding"/>
    <property type="evidence" value="ECO:0007669"/>
    <property type="project" value="TreeGrafter"/>
</dbReference>
<dbReference type="GO" id="GO:0008927">
    <property type="term" value="F:mannonate dehydratase activity"/>
    <property type="evidence" value="ECO:0007669"/>
    <property type="project" value="UniProtKB-UniRule"/>
</dbReference>
<dbReference type="GO" id="GO:0042840">
    <property type="term" value="P:D-glucuronate catabolic process"/>
    <property type="evidence" value="ECO:0007669"/>
    <property type="project" value="TreeGrafter"/>
</dbReference>
<dbReference type="FunFam" id="3.20.20.150:FF:000004">
    <property type="entry name" value="Mannonate dehydratase"/>
    <property type="match status" value="1"/>
</dbReference>
<dbReference type="FunFam" id="3.20.20.150:FF:000005">
    <property type="entry name" value="Mannonate dehydratase"/>
    <property type="match status" value="1"/>
</dbReference>
<dbReference type="Gene3D" id="3.20.20.150">
    <property type="entry name" value="Divalent-metal-dependent TIM barrel enzymes"/>
    <property type="match status" value="2"/>
</dbReference>
<dbReference type="HAMAP" id="MF_00106">
    <property type="entry name" value="UxuA"/>
    <property type="match status" value="1"/>
</dbReference>
<dbReference type="InterPro" id="IPR004628">
    <property type="entry name" value="Man_deHydtase"/>
</dbReference>
<dbReference type="InterPro" id="IPR036237">
    <property type="entry name" value="Xyl_isomerase-like_sf"/>
</dbReference>
<dbReference type="NCBIfam" id="NF003027">
    <property type="entry name" value="PRK03906.1"/>
    <property type="match status" value="1"/>
</dbReference>
<dbReference type="NCBIfam" id="TIGR00695">
    <property type="entry name" value="uxuA"/>
    <property type="match status" value="1"/>
</dbReference>
<dbReference type="PANTHER" id="PTHR30387">
    <property type="entry name" value="MANNONATE DEHYDRATASE"/>
    <property type="match status" value="1"/>
</dbReference>
<dbReference type="PANTHER" id="PTHR30387:SF2">
    <property type="entry name" value="MANNONATE DEHYDRATASE"/>
    <property type="match status" value="1"/>
</dbReference>
<dbReference type="Pfam" id="PF03786">
    <property type="entry name" value="UxuA"/>
    <property type="match status" value="1"/>
</dbReference>
<dbReference type="PIRSF" id="PIRSF016049">
    <property type="entry name" value="Man_dehyd"/>
    <property type="match status" value="1"/>
</dbReference>
<dbReference type="SUPFAM" id="SSF51658">
    <property type="entry name" value="Xylose isomerase-like"/>
    <property type="match status" value="1"/>
</dbReference>
<organism>
    <name type="scientific">Salmonella agona (strain SL483)</name>
    <dbReference type="NCBI Taxonomy" id="454166"/>
    <lineage>
        <taxon>Bacteria</taxon>
        <taxon>Pseudomonadati</taxon>
        <taxon>Pseudomonadota</taxon>
        <taxon>Gammaproteobacteria</taxon>
        <taxon>Enterobacterales</taxon>
        <taxon>Enterobacteriaceae</taxon>
        <taxon>Salmonella</taxon>
    </lineage>
</organism>
<protein>
    <recommendedName>
        <fullName evidence="1">Mannonate dehydratase</fullName>
        <ecNumber evidence="1">4.2.1.8</ecNumber>
    </recommendedName>
    <alternativeName>
        <fullName evidence="1">D-mannonate hydro-lyase</fullName>
    </alternativeName>
</protein>
<accession>B5F621</accession>
<keyword id="KW-0408">Iron</keyword>
<keyword id="KW-0456">Lyase</keyword>
<keyword id="KW-0464">Manganese</keyword>
<name>UXUA_SALA4</name>
<gene>
    <name evidence="1" type="primary">uxuA</name>
    <name type="ordered locus">SeAg_B3307</name>
</gene>
<sequence length="394" mass="44937">MKQTWRWYGPNDPVTLSDVRQAGATGVVTALHHIPNGEIWSVDEIQKRKAIVEEAGLEWSVVESVPIHEDIKTHTGQYDLWIKNYQQTLRNLAQCGIYTVCYNFMPVLDWTRTDLEYVLPDGSKALRFDQIEFAAFELHILKRPGAEADYTAEEIAQAERRFATMSEEDKARLTRNIIAGLPGAEEGYTLDQFRQHLATYKDIDKAKLREHFAYFLKAIIPVADEVGVRMAVHPDDPPRPILGLPRIVSTIEDMQWMVETVNSMANGFTMCTGSYGVRADNDLVDMIKQFGPRIYFTHLRSTLREENPKTFHEAAHLHGDVDMYEVVKAIVEEEHRRKAEGSDDLIPMRPDHGHQMLDDLKKKTNPGYSAIGRLKGLAEVRGVELAIQRAFFSK</sequence>
<proteinExistence type="inferred from homology"/>
<reference key="1">
    <citation type="journal article" date="2011" name="J. Bacteriol.">
        <title>Comparative genomics of 28 Salmonella enterica isolates: evidence for CRISPR-mediated adaptive sublineage evolution.</title>
        <authorList>
            <person name="Fricke W.F."/>
            <person name="Mammel M.K."/>
            <person name="McDermott P.F."/>
            <person name="Tartera C."/>
            <person name="White D.G."/>
            <person name="Leclerc J.E."/>
            <person name="Ravel J."/>
            <person name="Cebula T.A."/>
        </authorList>
    </citation>
    <scope>NUCLEOTIDE SEQUENCE [LARGE SCALE GENOMIC DNA]</scope>
    <source>
        <strain>SL483</strain>
    </source>
</reference>